<organism>
    <name type="scientific">Shigella sonnei (strain Ss046)</name>
    <dbReference type="NCBI Taxonomy" id="300269"/>
    <lineage>
        <taxon>Bacteria</taxon>
        <taxon>Pseudomonadati</taxon>
        <taxon>Pseudomonadota</taxon>
        <taxon>Gammaproteobacteria</taxon>
        <taxon>Enterobacterales</taxon>
        <taxon>Enterobacteriaceae</taxon>
        <taxon>Shigella</taxon>
    </lineage>
</organism>
<name>TAL1_SHISS</name>
<gene>
    <name evidence="2" type="primary">tal1</name>
    <name type="ordered locus">SSON_0009</name>
</gene>
<sequence>MTDKLTSLRQYTTVVADTGDIAAMKLYQPQDATTNPSLILNAAQIPEYRKLIDDAVAWAKQQSNDRAQQIVDATDKLAVNIGLEILKLVPGRISTEVDARLSYDTEASIAKAKRLIKLYNDAGISNDRILIKLASTWQGIRAAEQLEKEGINCNLTLLFSFAQARACAEAGVFLISPFVGRILDWYKANTDKKEYAPAEDPGVVSVSEIYQYYKEHGYETVVMGASFRNIGEILELAGCDRLTIAPALLKELAESEGAIERKLSYTGEVKARPARITESEFLWQHNQDPMAVDKLAEGIRKFAIDQEKLEKMIGDLL</sequence>
<feature type="chain" id="PRO_0000230973" description="Transaldolase 1">
    <location>
        <begin position="1"/>
        <end position="317"/>
    </location>
</feature>
<feature type="active site" description="Schiff-base intermediate with substrate" evidence="2">
    <location>
        <position position="132"/>
    </location>
</feature>
<comment type="function">
    <text evidence="2">Transaldolase is important for the balance of metabolites in the pentose-phosphate pathway.</text>
</comment>
<comment type="catalytic activity">
    <reaction evidence="2">
        <text>D-sedoheptulose 7-phosphate + D-glyceraldehyde 3-phosphate = D-erythrose 4-phosphate + beta-D-fructose 6-phosphate</text>
        <dbReference type="Rhea" id="RHEA:17053"/>
        <dbReference type="ChEBI" id="CHEBI:16897"/>
        <dbReference type="ChEBI" id="CHEBI:57483"/>
        <dbReference type="ChEBI" id="CHEBI:57634"/>
        <dbReference type="ChEBI" id="CHEBI:59776"/>
        <dbReference type="EC" id="2.2.1.2"/>
    </reaction>
</comment>
<comment type="pathway">
    <text evidence="2">Carbohydrate degradation; pentose phosphate pathway; D-glyceraldehyde 3-phosphate and beta-D-fructose 6-phosphate from D-ribose 5-phosphate and D-xylulose 5-phosphate (non-oxidative stage): step 2/3.</text>
</comment>
<comment type="subunit">
    <text evidence="1">Homodimer.</text>
</comment>
<comment type="subcellular location">
    <subcellularLocation>
        <location evidence="2">Cytoplasm</location>
    </subcellularLocation>
</comment>
<comment type="similarity">
    <text evidence="2">Belongs to the transaldolase family. Type 1 subfamily.</text>
</comment>
<keyword id="KW-0963">Cytoplasm</keyword>
<keyword id="KW-0570">Pentose shunt</keyword>
<keyword id="KW-1185">Reference proteome</keyword>
<keyword id="KW-0704">Schiff base</keyword>
<keyword id="KW-0808">Transferase</keyword>
<protein>
    <recommendedName>
        <fullName evidence="2">Transaldolase 1</fullName>
        <ecNumber evidence="2">2.2.1.2</ecNumber>
    </recommendedName>
</protein>
<accession>Q3Z606</accession>
<reference key="1">
    <citation type="journal article" date="2005" name="Nucleic Acids Res.">
        <title>Genome dynamics and diversity of Shigella species, the etiologic agents of bacillary dysentery.</title>
        <authorList>
            <person name="Yang F."/>
            <person name="Yang J."/>
            <person name="Zhang X."/>
            <person name="Chen L."/>
            <person name="Jiang Y."/>
            <person name="Yan Y."/>
            <person name="Tang X."/>
            <person name="Wang J."/>
            <person name="Xiong Z."/>
            <person name="Dong J."/>
            <person name="Xue Y."/>
            <person name="Zhu Y."/>
            <person name="Xu X."/>
            <person name="Sun L."/>
            <person name="Chen S."/>
            <person name="Nie H."/>
            <person name="Peng J."/>
            <person name="Xu J."/>
            <person name="Wang Y."/>
            <person name="Yuan Z."/>
            <person name="Wen Y."/>
            <person name="Yao Z."/>
            <person name="Shen Y."/>
            <person name="Qiang B."/>
            <person name="Hou Y."/>
            <person name="Yu J."/>
            <person name="Jin Q."/>
        </authorList>
    </citation>
    <scope>NUCLEOTIDE SEQUENCE [LARGE SCALE GENOMIC DNA]</scope>
    <source>
        <strain>Ss046</strain>
    </source>
</reference>
<evidence type="ECO:0000250" key="1"/>
<evidence type="ECO:0000255" key="2">
    <source>
        <dbReference type="HAMAP-Rule" id="MF_00492"/>
    </source>
</evidence>
<proteinExistence type="inferred from homology"/>
<dbReference type="EC" id="2.2.1.2" evidence="2"/>
<dbReference type="EMBL" id="CP000038">
    <property type="protein sequence ID" value="AAZ86806.1"/>
    <property type="molecule type" value="Genomic_DNA"/>
</dbReference>
<dbReference type="SMR" id="Q3Z606"/>
<dbReference type="KEGG" id="ssn:SSON_0009"/>
<dbReference type="HOGENOM" id="CLU_047470_0_1_6"/>
<dbReference type="UniPathway" id="UPA00115">
    <property type="reaction ID" value="UER00414"/>
</dbReference>
<dbReference type="Proteomes" id="UP000002529">
    <property type="component" value="Chromosome"/>
</dbReference>
<dbReference type="GO" id="GO:0005829">
    <property type="term" value="C:cytosol"/>
    <property type="evidence" value="ECO:0007669"/>
    <property type="project" value="TreeGrafter"/>
</dbReference>
<dbReference type="GO" id="GO:0004801">
    <property type="term" value="F:transaldolase activity"/>
    <property type="evidence" value="ECO:0000250"/>
    <property type="project" value="UniProtKB"/>
</dbReference>
<dbReference type="GO" id="GO:0005975">
    <property type="term" value="P:carbohydrate metabolic process"/>
    <property type="evidence" value="ECO:0007669"/>
    <property type="project" value="InterPro"/>
</dbReference>
<dbReference type="GO" id="GO:0006098">
    <property type="term" value="P:pentose-phosphate shunt"/>
    <property type="evidence" value="ECO:0007669"/>
    <property type="project" value="UniProtKB-UniRule"/>
</dbReference>
<dbReference type="CDD" id="cd00957">
    <property type="entry name" value="Transaldolase_TalAB"/>
    <property type="match status" value="1"/>
</dbReference>
<dbReference type="FunFam" id="3.20.20.70:FF:000002">
    <property type="entry name" value="Transaldolase"/>
    <property type="match status" value="1"/>
</dbReference>
<dbReference type="Gene3D" id="3.20.20.70">
    <property type="entry name" value="Aldolase class I"/>
    <property type="match status" value="1"/>
</dbReference>
<dbReference type="HAMAP" id="MF_00492">
    <property type="entry name" value="Transaldolase_1"/>
    <property type="match status" value="1"/>
</dbReference>
<dbReference type="InterPro" id="IPR013785">
    <property type="entry name" value="Aldolase_TIM"/>
</dbReference>
<dbReference type="InterPro" id="IPR001585">
    <property type="entry name" value="TAL/FSA"/>
</dbReference>
<dbReference type="InterPro" id="IPR004730">
    <property type="entry name" value="Transaldolase_1"/>
</dbReference>
<dbReference type="InterPro" id="IPR018225">
    <property type="entry name" value="Transaldolase_AS"/>
</dbReference>
<dbReference type="NCBIfam" id="NF009001">
    <property type="entry name" value="PRK12346.1"/>
    <property type="match status" value="1"/>
</dbReference>
<dbReference type="NCBIfam" id="TIGR00874">
    <property type="entry name" value="talAB"/>
    <property type="match status" value="1"/>
</dbReference>
<dbReference type="PANTHER" id="PTHR10683">
    <property type="entry name" value="TRANSALDOLASE"/>
    <property type="match status" value="1"/>
</dbReference>
<dbReference type="PANTHER" id="PTHR10683:SF18">
    <property type="entry name" value="TRANSALDOLASE"/>
    <property type="match status" value="1"/>
</dbReference>
<dbReference type="Pfam" id="PF00923">
    <property type="entry name" value="TAL_FSA"/>
    <property type="match status" value="1"/>
</dbReference>
<dbReference type="SUPFAM" id="SSF51569">
    <property type="entry name" value="Aldolase"/>
    <property type="match status" value="1"/>
</dbReference>
<dbReference type="PROSITE" id="PS01054">
    <property type="entry name" value="TRANSALDOLASE_1"/>
    <property type="match status" value="1"/>
</dbReference>
<dbReference type="PROSITE" id="PS00958">
    <property type="entry name" value="TRANSALDOLASE_2"/>
    <property type="match status" value="1"/>
</dbReference>